<evidence type="ECO:0000250" key="1"/>
<evidence type="ECO:0000305" key="2"/>
<sequence length="177" mass="19439">MMNSCTPNKKSSYSYEDLLASGRGELFGEDGPQLPAPTMLMMDRIVEMNETGGQFNKGYIEAELDIKPDLPFFGCHFIGDPVMPGCLGLDAMWQLVGFYLGWIGGKGKGRALGVGEVKFTGQILPSAKKVVYRIHMKRVINRKLVMGMADGEVEVDGRVIYTATDLKVGLFQDTSAF</sequence>
<protein>
    <recommendedName>
        <fullName>3-hydroxydecanoyl-[acyl-carrier-protein] dehydratase</fullName>
        <ecNumber>4.2.1.59</ecNumber>
    </recommendedName>
    <alternativeName>
        <fullName>3-hydroxyacyl-[acyl-carrier-protein] dehydratase FabA</fullName>
    </alternativeName>
    <alternativeName>
        <fullName>Beta-hydroxydecanoyl thioester dehydrase</fullName>
    </alternativeName>
    <alternativeName>
        <fullName>Trans-2-decenoyl-[acyl-carrier-protein] isomerase</fullName>
        <ecNumber>5.3.3.14</ecNumber>
    </alternativeName>
</protein>
<comment type="function">
    <text evidence="1">Necessary for the introduction of cis unsaturation into fatty acids. Catalyzes the dehydration of (3R)-3-hydroxydecanoyl-ACP to E-(2)-decenoyl-ACP and then its isomerization to Z-(3)-decenoyl-ACP. Can catalyze the dehydratase reaction for beta-hydroxyacyl-ACPs with saturated chain lengths up to 16:0, being most active on intermediate chain length (By similarity).</text>
</comment>
<comment type="catalytic activity">
    <reaction>
        <text>a (3R)-hydroxyacyl-[ACP] = a (2E)-enoyl-[ACP] + H2O</text>
        <dbReference type="Rhea" id="RHEA:13097"/>
        <dbReference type="Rhea" id="RHEA-COMP:9925"/>
        <dbReference type="Rhea" id="RHEA-COMP:9945"/>
        <dbReference type="ChEBI" id="CHEBI:15377"/>
        <dbReference type="ChEBI" id="CHEBI:78784"/>
        <dbReference type="ChEBI" id="CHEBI:78827"/>
        <dbReference type="EC" id="4.2.1.59"/>
    </reaction>
</comment>
<comment type="catalytic activity">
    <reaction>
        <text>(3R)-hydroxydecanoyl-[ACP] = (2E)-decenoyl-[ACP] + H2O</text>
        <dbReference type="Rhea" id="RHEA:41860"/>
        <dbReference type="Rhea" id="RHEA-COMP:9638"/>
        <dbReference type="Rhea" id="RHEA-COMP:9639"/>
        <dbReference type="ChEBI" id="CHEBI:15377"/>
        <dbReference type="ChEBI" id="CHEBI:78466"/>
        <dbReference type="ChEBI" id="CHEBI:78467"/>
    </reaction>
</comment>
<comment type="catalytic activity">
    <reaction>
        <text>(2E)-decenoyl-[ACP] = (3Z)-decenoyl-[ACP]</text>
        <dbReference type="Rhea" id="RHEA:23568"/>
        <dbReference type="Rhea" id="RHEA-COMP:9639"/>
        <dbReference type="Rhea" id="RHEA-COMP:9927"/>
        <dbReference type="ChEBI" id="CHEBI:78467"/>
        <dbReference type="ChEBI" id="CHEBI:78798"/>
        <dbReference type="EC" id="5.3.3.14"/>
    </reaction>
</comment>
<comment type="pathway">
    <text>Lipid metabolism; fatty acid biosynthesis.</text>
</comment>
<comment type="subunit">
    <text evidence="1">Homodimer.</text>
</comment>
<comment type="subcellular location">
    <subcellularLocation>
        <location evidence="1">Cytoplasm</location>
    </subcellularLocation>
</comment>
<comment type="similarity">
    <text evidence="2">Belongs to the thioester dehydratase family. FabA subfamily.</text>
</comment>
<keyword id="KW-0963">Cytoplasm</keyword>
<keyword id="KW-0275">Fatty acid biosynthesis</keyword>
<keyword id="KW-0276">Fatty acid metabolism</keyword>
<keyword id="KW-0413">Isomerase</keyword>
<keyword id="KW-0444">Lipid biosynthesis</keyword>
<keyword id="KW-0443">Lipid metabolism</keyword>
<keyword id="KW-0456">Lyase</keyword>
<keyword id="KW-1185">Reference proteome</keyword>
<reference key="1">
    <citation type="journal article" date="2001" name="Proc. Natl. Acad. Sci. U.S.A.">
        <title>Complete genomic sequence of Pasteurella multocida Pm70.</title>
        <authorList>
            <person name="May B.J."/>
            <person name="Zhang Q."/>
            <person name="Li L.L."/>
            <person name="Paustian M.L."/>
            <person name="Whittam T.S."/>
            <person name="Kapur V."/>
        </authorList>
    </citation>
    <scope>NUCLEOTIDE SEQUENCE [LARGE SCALE GENOMIC DNA]</scope>
    <source>
        <strain>Pm70</strain>
    </source>
</reference>
<dbReference type="EC" id="4.2.1.59"/>
<dbReference type="EC" id="5.3.3.14"/>
<dbReference type="EMBL" id="AE004439">
    <property type="protein sequence ID" value="AAK02568.1"/>
    <property type="molecule type" value="Genomic_DNA"/>
</dbReference>
<dbReference type="SMR" id="Q9CNE8"/>
<dbReference type="STRING" id="272843.PM0484"/>
<dbReference type="EnsemblBacteria" id="AAK02568">
    <property type="protein sequence ID" value="AAK02568"/>
    <property type="gene ID" value="PM0484"/>
</dbReference>
<dbReference type="KEGG" id="pmu:PM0484"/>
<dbReference type="HOGENOM" id="CLU_097925_0_0_6"/>
<dbReference type="UniPathway" id="UPA00094"/>
<dbReference type="Proteomes" id="UP000000809">
    <property type="component" value="Chromosome"/>
</dbReference>
<dbReference type="GO" id="GO:0005737">
    <property type="term" value="C:cytoplasm"/>
    <property type="evidence" value="ECO:0007669"/>
    <property type="project" value="UniProtKB-SubCell"/>
</dbReference>
<dbReference type="GO" id="GO:0019171">
    <property type="term" value="F:(3R)-hydroxyacyl-[acyl-carrier-protein] dehydratase activity"/>
    <property type="evidence" value="ECO:0007669"/>
    <property type="project" value="UniProtKB-UniRule"/>
</dbReference>
<dbReference type="GO" id="GO:0034017">
    <property type="term" value="F:trans-2-decenoyl-acyl-carrier-protein isomerase activity"/>
    <property type="evidence" value="ECO:0007669"/>
    <property type="project" value="UniProtKB-UniRule"/>
</dbReference>
<dbReference type="GO" id="GO:0006636">
    <property type="term" value="P:unsaturated fatty acid biosynthetic process"/>
    <property type="evidence" value="ECO:0007669"/>
    <property type="project" value="UniProtKB-UniRule"/>
</dbReference>
<dbReference type="CDD" id="cd01287">
    <property type="entry name" value="FabA"/>
    <property type="match status" value="1"/>
</dbReference>
<dbReference type="FunFam" id="3.10.129.10:FF:000003">
    <property type="entry name" value="3-hydroxydecanoyl-[acyl-carrier-protein] dehydratase"/>
    <property type="match status" value="1"/>
</dbReference>
<dbReference type="Gene3D" id="3.10.129.10">
    <property type="entry name" value="Hotdog Thioesterase"/>
    <property type="match status" value="1"/>
</dbReference>
<dbReference type="HAMAP" id="MF_00405">
    <property type="entry name" value="FabA"/>
    <property type="match status" value="1"/>
</dbReference>
<dbReference type="InterPro" id="IPR010083">
    <property type="entry name" value="FabA"/>
</dbReference>
<dbReference type="InterPro" id="IPR013114">
    <property type="entry name" value="FabA_FabZ"/>
</dbReference>
<dbReference type="InterPro" id="IPR029069">
    <property type="entry name" value="HotDog_dom_sf"/>
</dbReference>
<dbReference type="NCBIfam" id="TIGR01749">
    <property type="entry name" value="fabA"/>
    <property type="match status" value="1"/>
</dbReference>
<dbReference type="NCBIfam" id="NF003509">
    <property type="entry name" value="PRK05174.1"/>
    <property type="match status" value="1"/>
</dbReference>
<dbReference type="PANTHER" id="PTHR30272">
    <property type="entry name" value="3-HYDROXYACYL-[ACYL-CARRIER-PROTEIN] DEHYDRATASE"/>
    <property type="match status" value="1"/>
</dbReference>
<dbReference type="PANTHER" id="PTHR30272:SF8">
    <property type="entry name" value="3-HYDROXYDECANOYL-[ACYL-CARRIER-PROTEIN] DEHYDRATASE"/>
    <property type="match status" value="1"/>
</dbReference>
<dbReference type="Pfam" id="PF07977">
    <property type="entry name" value="FabA"/>
    <property type="match status" value="1"/>
</dbReference>
<dbReference type="SUPFAM" id="SSF54637">
    <property type="entry name" value="Thioesterase/thiol ester dehydrase-isomerase"/>
    <property type="match status" value="1"/>
</dbReference>
<accession>Q9CNE8</accession>
<name>FABA_PASMU</name>
<organism>
    <name type="scientific">Pasteurella multocida (strain Pm70)</name>
    <dbReference type="NCBI Taxonomy" id="272843"/>
    <lineage>
        <taxon>Bacteria</taxon>
        <taxon>Pseudomonadati</taxon>
        <taxon>Pseudomonadota</taxon>
        <taxon>Gammaproteobacteria</taxon>
        <taxon>Pasteurellales</taxon>
        <taxon>Pasteurellaceae</taxon>
        <taxon>Pasteurella</taxon>
    </lineage>
</organism>
<gene>
    <name type="primary">fabA</name>
    <name type="ordered locus">PM0484</name>
</gene>
<proteinExistence type="inferred from homology"/>
<feature type="chain" id="PRO_0000091603" description="3-hydroxydecanoyl-[acyl-carrier-protein] dehydratase">
    <location>
        <begin position="1"/>
        <end position="177"/>
    </location>
</feature>
<feature type="active site" evidence="1">
    <location>
        <position position="76"/>
    </location>
</feature>